<reference key="1">
    <citation type="journal article" date="2004" name="Proc. Natl. Acad. Sci. U.S.A.">
        <title>The diploid genome sequence of Candida albicans.</title>
        <authorList>
            <person name="Jones T."/>
            <person name="Federspiel N.A."/>
            <person name="Chibana H."/>
            <person name="Dungan J."/>
            <person name="Kalman S."/>
            <person name="Magee B.B."/>
            <person name="Newport G."/>
            <person name="Thorstenson Y.R."/>
            <person name="Agabian N."/>
            <person name="Magee P.T."/>
            <person name="Davis R.W."/>
            <person name="Scherer S."/>
        </authorList>
    </citation>
    <scope>NUCLEOTIDE SEQUENCE [LARGE SCALE GENOMIC DNA]</scope>
    <source>
        <strain>SC5314 / ATCC MYA-2876</strain>
    </source>
</reference>
<reference key="2">
    <citation type="journal article" date="2007" name="Genome Biol.">
        <title>Assembly of the Candida albicans genome into sixteen supercontigs aligned on the eight chromosomes.</title>
        <authorList>
            <person name="van het Hoog M."/>
            <person name="Rast T.J."/>
            <person name="Martchenko M."/>
            <person name="Grindle S."/>
            <person name="Dignard D."/>
            <person name="Hogues H."/>
            <person name="Cuomo C."/>
            <person name="Berriman M."/>
            <person name="Scherer S."/>
            <person name="Magee B.B."/>
            <person name="Whiteway M."/>
            <person name="Chibana H."/>
            <person name="Nantel A."/>
            <person name="Magee P.T."/>
        </authorList>
    </citation>
    <scope>GENOME REANNOTATION</scope>
    <source>
        <strain>SC5314 / ATCC MYA-2876</strain>
    </source>
</reference>
<reference key="3">
    <citation type="journal article" date="2013" name="Genome Biol.">
        <title>Assembly of a phased diploid Candida albicans genome facilitates allele-specific measurements and provides a simple model for repeat and indel structure.</title>
        <authorList>
            <person name="Muzzey D."/>
            <person name="Schwartz K."/>
            <person name="Weissman J.S."/>
            <person name="Sherlock G."/>
        </authorList>
    </citation>
    <scope>NUCLEOTIDE SEQUENCE [LARGE SCALE GENOMIC DNA]</scope>
    <scope>GENOME REANNOTATION</scope>
    <source>
        <strain>SC5314 / ATCC MYA-2876</strain>
    </source>
</reference>
<sequence length="278" mass="32199">MNDIDNLAEIKKKLWNGSINVKILLNIEDQIIEYLLTIPRNSYFPTVFPQLIRYFQNFITTIELSKVPIWLEFEEVPLKWNLPVGVLYDYLYLPALLNDHDLGCWTISMKYEPVYPIEYIIPFNEKLAGDGQIDYMKTMNRILMNQLKQSCFVLNGTAKPIMQLSEANTNQLWKSLISRNLGDFNVLNKKIIKTIDRIPVKIYIAGSPIVVQAPISKDQTLQEILSLHTPNLSSSSSSMSHPYIQGIDVTSLMNQSIREIWQLFKHLDNFLYITLIIL</sequence>
<feature type="chain" id="PRO_0000219000" description="Autophagy protein 5">
    <location>
        <begin position="1"/>
        <end position="278"/>
    </location>
</feature>
<feature type="cross-link" description="Glycyl lysine isopeptide (Lys-Gly) (interchain with G-Cter in ATG12)" evidence="1">
    <location>
        <position position="148"/>
    </location>
</feature>
<keyword id="KW-0072">Autophagy</keyword>
<keyword id="KW-1017">Isopeptide bond</keyword>
<keyword id="KW-0472">Membrane</keyword>
<keyword id="KW-0653">Protein transport</keyword>
<keyword id="KW-1185">Reference proteome</keyword>
<keyword id="KW-0813">Transport</keyword>
<keyword id="KW-0832">Ubl conjugation</keyword>
<comment type="function">
    <text evidence="1">Involved in cytoplasm to vacuole transport (Cvt) and autophagic vesicle formation. Autophagy is essential for maintenance of amino acid levels and protein synthesis under nitrogen starvation. Required for selective autophagic degradation of the nucleus (nucleophagy). Also required for mitophagy, which eliminates defective or superfluous mitochondria in order to fulfill cellular energy requirements and prevent excess ROS production. Conjugation with ATG12, through a ubiquitin-like conjugating system involving ATG7 as an E1-like activating enzyme and ATG10 as an E2-like conjugating enzyme, is essential for its function. The ATG12-ATG5 conjugate acts as an E3-like enzyme which is required for lipidation of ATG8 and ATG8 association to the vesicle membranes (By similarity).</text>
</comment>
<comment type="subunit">
    <text evidence="1">Conjugated with ATG12.</text>
</comment>
<comment type="subcellular location">
    <subcellularLocation>
        <location evidence="1">Preautophagosomal structure membrane</location>
        <topology evidence="1">Peripheral membrane protein</topology>
    </subcellularLocation>
</comment>
<comment type="PTM">
    <text evidence="1">Conjugated to ATG12; which is essential for autophagy.</text>
</comment>
<comment type="similarity">
    <text evidence="2">Belongs to the ATG5 family.</text>
</comment>
<name>ATG5_CANAL</name>
<accession>Q59VY1</accession>
<accession>A0A1D8PCQ1</accession>
<gene>
    <name type="primary">ATG5</name>
    <name type="ordered locus">CAALFM_C102200CA</name>
    <name type="ORF">CaO19.11161</name>
    <name type="ORF">CaO19.3677</name>
</gene>
<dbReference type="EMBL" id="CP017623">
    <property type="protein sequence ID" value="AOW25905.1"/>
    <property type="molecule type" value="Genomic_DNA"/>
</dbReference>
<dbReference type="RefSeq" id="XP_713771.2">
    <property type="nucleotide sequence ID" value="XM_708678.2"/>
</dbReference>
<dbReference type="SMR" id="Q59VY1"/>
<dbReference type="FunCoup" id="Q59VY1">
    <property type="interactions" value="354"/>
</dbReference>
<dbReference type="STRING" id="237561.Q59VY1"/>
<dbReference type="EnsemblFungi" id="C1_02200C_A-T">
    <property type="protein sequence ID" value="C1_02200C_A-T-p1"/>
    <property type="gene ID" value="C1_02200C_A"/>
</dbReference>
<dbReference type="GeneID" id="3644593"/>
<dbReference type="KEGG" id="cal:CAALFM_C102200CA"/>
<dbReference type="CGD" id="CAL0000174020">
    <property type="gene designation" value="orf19.11161"/>
</dbReference>
<dbReference type="VEuPathDB" id="FungiDB:C1_02200C_A"/>
<dbReference type="eggNOG" id="KOG2976">
    <property type="taxonomic scope" value="Eukaryota"/>
</dbReference>
<dbReference type="HOGENOM" id="CLU_051894_2_0_1"/>
<dbReference type="InParanoid" id="Q59VY1"/>
<dbReference type="OrthoDB" id="272162at2759"/>
<dbReference type="PRO" id="PR:Q59VY1"/>
<dbReference type="Proteomes" id="UP000000559">
    <property type="component" value="Chromosome 1"/>
</dbReference>
<dbReference type="GO" id="GO:0034274">
    <property type="term" value="C:Atg12-Atg5-Atg16 complex"/>
    <property type="evidence" value="ECO:0000318"/>
    <property type="project" value="GO_Central"/>
</dbReference>
<dbReference type="GO" id="GO:0005776">
    <property type="term" value="C:autophagosome"/>
    <property type="evidence" value="ECO:0000318"/>
    <property type="project" value="GO_Central"/>
</dbReference>
<dbReference type="GO" id="GO:0061908">
    <property type="term" value="C:phagophore"/>
    <property type="evidence" value="ECO:0000318"/>
    <property type="project" value="GO_Central"/>
</dbReference>
<dbReference type="GO" id="GO:0034045">
    <property type="term" value="C:phagophore assembly site membrane"/>
    <property type="evidence" value="ECO:0000318"/>
    <property type="project" value="GO_Central"/>
</dbReference>
<dbReference type="GO" id="GO:0035973">
    <property type="term" value="P:aggrephagy"/>
    <property type="evidence" value="ECO:0000318"/>
    <property type="project" value="GO_Central"/>
</dbReference>
<dbReference type="GO" id="GO:0000045">
    <property type="term" value="P:autophagosome assembly"/>
    <property type="evidence" value="ECO:0000318"/>
    <property type="project" value="GO_Central"/>
</dbReference>
<dbReference type="GO" id="GO:0006995">
    <property type="term" value="P:cellular response to nitrogen starvation"/>
    <property type="evidence" value="ECO:0000318"/>
    <property type="project" value="GO_Central"/>
</dbReference>
<dbReference type="GO" id="GO:0000423">
    <property type="term" value="P:mitophagy"/>
    <property type="evidence" value="ECO:0000318"/>
    <property type="project" value="GO_Central"/>
</dbReference>
<dbReference type="GO" id="GO:0034727">
    <property type="term" value="P:piecemeal microautophagy of the nucleus"/>
    <property type="evidence" value="ECO:0000318"/>
    <property type="project" value="GO_Central"/>
</dbReference>
<dbReference type="GO" id="GO:0015031">
    <property type="term" value="P:protein transport"/>
    <property type="evidence" value="ECO:0007669"/>
    <property type="project" value="UniProtKB-KW"/>
</dbReference>
<dbReference type="Gene3D" id="3.10.20.620">
    <property type="match status" value="1"/>
</dbReference>
<dbReference type="Gene3D" id="1.10.246.190">
    <property type="entry name" value="Autophagy protein Apg5, helix rich domain"/>
    <property type="match status" value="1"/>
</dbReference>
<dbReference type="Gene3D" id="3.10.20.90">
    <property type="entry name" value="Phosphatidylinositol 3-kinase Catalytic Subunit, Chain A, domain 1"/>
    <property type="match status" value="1"/>
</dbReference>
<dbReference type="InterPro" id="IPR007239">
    <property type="entry name" value="Atg5"/>
</dbReference>
<dbReference type="InterPro" id="IPR048940">
    <property type="entry name" value="ATG5_HBR"/>
</dbReference>
<dbReference type="InterPro" id="IPR042526">
    <property type="entry name" value="Atg5_HR"/>
</dbReference>
<dbReference type="InterPro" id="IPR048939">
    <property type="entry name" value="ATG5_UblA"/>
</dbReference>
<dbReference type="InterPro" id="IPR042527">
    <property type="entry name" value="Atg5_UblA_dom_sf"/>
</dbReference>
<dbReference type="InterPro" id="IPR048318">
    <property type="entry name" value="ATG5_UblB"/>
</dbReference>
<dbReference type="PANTHER" id="PTHR13040">
    <property type="entry name" value="AUTOPHAGY PROTEIN 5"/>
    <property type="match status" value="1"/>
</dbReference>
<dbReference type="PANTHER" id="PTHR13040:SF2">
    <property type="entry name" value="AUTOPHAGY PROTEIN 5"/>
    <property type="match status" value="1"/>
</dbReference>
<dbReference type="Pfam" id="PF20637">
    <property type="entry name" value="ATG5_HBR"/>
    <property type="match status" value="1"/>
</dbReference>
<dbReference type="Pfam" id="PF20638">
    <property type="entry name" value="ATG5_UblA"/>
    <property type="match status" value="1"/>
</dbReference>
<dbReference type="Pfam" id="PF04106">
    <property type="entry name" value="ATG5_UblB"/>
    <property type="match status" value="1"/>
</dbReference>
<organism>
    <name type="scientific">Candida albicans (strain SC5314 / ATCC MYA-2876)</name>
    <name type="common">Yeast</name>
    <dbReference type="NCBI Taxonomy" id="237561"/>
    <lineage>
        <taxon>Eukaryota</taxon>
        <taxon>Fungi</taxon>
        <taxon>Dikarya</taxon>
        <taxon>Ascomycota</taxon>
        <taxon>Saccharomycotina</taxon>
        <taxon>Pichiomycetes</taxon>
        <taxon>Debaryomycetaceae</taxon>
        <taxon>Candida/Lodderomyces clade</taxon>
        <taxon>Candida</taxon>
    </lineage>
</organism>
<protein>
    <recommendedName>
        <fullName>Autophagy protein 5</fullName>
    </recommendedName>
</protein>
<evidence type="ECO:0000250" key="1"/>
<evidence type="ECO:0000305" key="2"/>
<proteinExistence type="inferred from homology"/>